<accession>Q9NQX7</accession>
<accession>B3KPG4</accession>
<accession>Q4G0A8</accession>
<accession>Q53H84</accession>
<accession>Q6IAE7</accession>
<accession>Q86VK5</accession>
<accession>Q8N288</accession>
<accession>Q8TAW0</accession>
<accession>Q9BUP8</accession>
<proteinExistence type="evidence at protein level"/>
<evidence type="ECO:0000250" key="1"/>
<evidence type="ECO:0000250" key="2">
    <source>
        <dbReference type="UniProtKB" id="Q5PQL7"/>
    </source>
</evidence>
<evidence type="ECO:0000255" key="3"/>
<evidence type="ECO:0000255" key="4">
    <source>
        <dbReference type="PROSITE-ProRule" id="PRU00255"/>
    </source>
</evidence>
<evidence type="ECO:0000269" key="5">
    <source>
    </source>
</evidence>
<evidence type="ECO:0000269" key="6">
    <source>
    </source>
</evidence>
<evidence type="ECO:0000269" key="7">
    <source>
    </source>
</evidence>
<evidence type="ECO:0000269" key="8">
    <source>
    </source>
</evidence>
<evidence type="ECO:0000269" key="9">
    <source>
    </source>
</evidence>
<evidence type="ECO:0000269" key="10">
    <source>
    </source>
</evidence>
<evidence type="ECO:0000269" key="11">
    <source>
    </source>
</evidence>
<evidence type="ECO:0000269" key="12">
    <source>
    </source>
</evidence>
<evidence type="ECO:0000269" key="13">
    <source ref="1"/>
</evidence>
<evidence type="ECO:0000269" key="14">
    <source ref="7"/>
</evidence>
<evidence type="ECO:0000303" key="15">
    <source>
    </source>
</evidence>
<evidence type="ECO:0000303" key="16">
    <source>
    </source>
</evidence>
<evidence type="ECO:0000305" key="17"/>
<evidence type="ECO:0000305" key="18">
    <source>
    </source>
</evidence>
<reference key="1">
    <citation type="submission" date="1997-05" db="EMBL/GenBank/DDBJ databases">
        <title>Molecular cloning of a gene specifically expressed in human brain.</title>
        <authorList>
            <person name="Yoshimoto M."/>
            <person name="Yazaki M."/>
            <person name="Matsumoto K."/>
            <person name="Takayama K."/>
        </authorList>
    </citation>
    <scope>NUCLEOTIDE SEQUENCE [MRNA] (ISOFORM 1)</scope>
    <scope>VARIANT SER-53</scope>
    <source>
        <tissue>Brain</tissue>
    </source>
</reference>
<reference key="2">
    <citation type="journal article" date="2001" name="Gene">
        <title>Sequence, genomic structure and tissue expression of human BRI3, a member of the BRI gene family.</title>
        <authorList>
            <person name="Vidal R."/>
            <person name="Calero M."/>
            <person name="Revesz T."/>
            <person name="Plant G."/>
            <person name="Ghiso J."/>
            <person name="Frangione B."/>
        </authorList>
    </citation>
    <scope>NUCLEOTIDE SEQUENCE [MRNA] (ISOFORM 1)</scope>
    <scope>TISSUE SPECIFICITY</scope>
</reference>
<reference key="3">
    <citation type="submission" date="2001-07" db="EMBL/GenBank/DDBJ databases">
        <authorList>
            <person name="Wu J."/>
            <person name="Zhang B."/>
            <person name="Peng X."/>
            <person name="Yuan J."/>
            <person name="Qiang B."/>
        </authorList>
    </citation>
    <scope>NUCLEOTIDE SEQUENCE [MRNA] (ISOFORM 1)</scope>
</reference>
<reference key="4">
    <citation type="submission" date="2000-05" db="EMBL/GenBank/DDBJ databases">
        <authorList>
            <person name="Xu X."/>
            <person name="Yang Y."/>
            <person name="Gao G."/>
            <person name="Xiao H."/>
            <person name="Chen Z."/>
            <person name="Han Z."/>
        </authorList>
    </citation>
    <scope>NUCLEOTIDE SEQUENCE [LARGE SCALE MRNA] (ISOFORM 1)</scope>
    <source>
        <tissue>Pituitary</tissue>
    </source>
</reference>
<reference key="5">
    <citation type="journal article" date="2001" name="Genome Res.">
        <title>Towards a catalog of human genes and proteins: sequencing and analysis of 500 novel complete protein coding human cDNAs.</title>
        <authorList>
            <person name="Wiemann S."/>
            <person name="Weil B."/>
            <person name="Wellenreuther R."/>
            <person name="Gassenhuber J."/>
            <person name="Glassl S."/>
            <person name="Ansorge W."/>
            <person name="Boecher M."/>
            <person name="Bloecker H."/>
            <person name="Bauersachs S."/>
            <person name="Blum H."/>
            <person name="Lauber J."/>
            <person name="Duesterhoeft A."/>
            <person name="Beyer A."/>
            <person name="Koehrer K."/>
            <person name="Strack N."/>
            <person name="Mewes H.-W."/>
            <person name="Ottenwaelder B."/>
            <person name="Obermaier B."/>
            <person name="Tampe J."/>
            <person name="Heubner D."/>
            <person name="Wambutt R."/>
            <person name="Korn B."/>
            <person name="Klein M."/>
            <person name="Poustka A."/>
        </authorList>
    </citation>
    <scope>NUCLEOTIDE SEQUENCE [LARGE SCALE MRNA] (ISOFORM 1)</scope>
    <source>
        <tissue>Brain</tissue>
    </source>
</reference>
<reference key="6">
    <citation type="journal article" date="2004" name="Nat. Genet.">
        <title>Complete sequencing and characterization of 21,243 full-length human cDNAs.</title>
        <authorList>
            <person name="Ota T."/>
            <person name="Suzuki Y."/>
            <person name="Nishikawa T."/>
            <person name="Otsuki T."/>
            <person name="Sugiyama T."/>
            <person name="Irie R."/>
            <person name="Wakamatsu A."/>
            <person name="Hayashi K."/>
            <person name="Sato H."/>
            <person name="Nagai K."/>
            <person name="Kimura K."/>
            <person name="Makita H."/>
            <person name="Sekine M."/>
            <person name="Obayashi M."/>
            <person name="Nishi T."/>
            <person name="Shibahara T."/>
            <person name="Tanaka T."/>
            <person name="Ishii S."/>
            <person name="Yamamoto J."/>
            <person name="Saito K."/>
            <person name="Kawai Y."/>
            <person name="Isono Y."/>
            <person name="Nakamura Y."/>
            <person name="Nagahari K."/>
            <person name="Murakami K."/>
            <person name="Yasuda T."/>
            <person name="Iwayanagi T."/>
            <person name="Wagatsuma M."/>
            <person name="Shiratori A."/>
            <person name="Sudo H."/>
            <person name="Hosoiri T."/>
            <person name="Kaku Y."/>
            <person name="Kodaira H."/>
            <person name="Kondo H."/>
            <person name="Sugawara M."/>
            <person name="Takahashi M."/>
            <person name="Kanda K."/>
            <person name="Yokoi T."/>
            <person name="Furuya T."/>
            <person name="Kikkawa E."/>
            <person name="Omura Y."/>
            <person name="Abe K."/>
            <person name="Kamihara K."/>
            <person name="Katsuta N."/>
            <person name="Sato K."/>
            <person name="Tanikawa M."/>
            <person name="Yamazaki M."/>
            <person name="Ninomiya K."/>
            <person name="Ishibashi T."/>
            <person name="Yamashita H."/>
            <person name="Murakawa K."/>
            <person name="Fujimori K."/>
            <person name="Tanai H."/>
            <person name="Kimata M."/>
            <person name="Watanabe M."/>
            <person name="Hiraoka S."/>
            <person name="Chiba Y."/>
            <person name="Ishida S."/>
            <person name="Ono Y."/>
            <person name="Takiguchi S."/>
            <person name="Watanabe S."/>
            <person name="Yosida M."/>
            <person name="Hotuta T."/>
            <person name="Kusano J."/>
            <person name="Kanehori K."/>
            <person name="Takahashi-Fujii A."/>
            <person name="Hara H."/>
            <person name="Tanase T.-O."/>
            <person name="Nomura Y."/>
            <person name="Togiya S."/>
            <person name="Komai F."/>
            <person name="Hara R."/>
            <person name="Takeuchi K."/>
            <person name="Arita M."/>
            <person name="Imose N."/>
            <person name="Musashino K."/>
            <person name="Yuuki H."/>
            <person name="Oshima A."/>
            <person name="Sasaki N."/>
            <person name="Aotsuka S."/>
            <person name="Yoshikawa Y."/>
            <person name="Matsunawa H."/>
            <person name="Ichihara T."/>
            <person name="Shiohata N."/>
            <person name="Sano S."/>
            <person name="Moriya S."/>
            <person name="Momiyama H."/>
            <person name="Satoh N."/>
            <person name="Takami S."/>
            <person name="Terashima Y."/>
            <person name="Suzuki O."/>
            <person name="Nakagawa S."/>
            <person name="Senoh A."/>
            <person name="Mizoguchi H."/>
            <person name="Goto Y."/>
            <person name="Shimizu F."/>
            <person name="Wakebe H."/>
            <person name="Hishigaki H."/>
            <person name="Watanabe T."/>
            <person name="Sugiyama A."/>
            <person name="Takemoto M."/>
            <person name="Kawakami B."/>
            <person name="Yamazaki M."/>
            <person name="Watanabe K."/>
            <person name="Kumagai A."/>
            <person name="Itakura S."/>
            <person name="Fukuzumi Y."/>
            <person name="Fujimori Y."/>
            <person name="Komiyama M."/>
            <person name="Tashiro H."/>
            <person name="Tanigami A."/>
            <person name="Fujiwara T."/>
            <person name="Ono T."/>
            <person name="Yamada K."/>
            <person name="Fujii Y."/>
            <person name="Ozaki K."/>
            <person name="Hirao M."/>
            <person name="Ohmori Y."/>
            <person name="Kawabata A."/>
            <person name="Hikiji T."/>
            <person name="Kobatake N."/>
            <person name="Inagaki H."/>
            <person name="Ikema Y."/>
            <person name="Okamoto S."/>
            <person name="Okitani R."/>
            <person name="Kawakami T."/>
            <person name="Noguchi S."/>
            <person name="Itoh T."/>
            <person name="Shigeta K."/>
            <person name="Senba T."/>
            <person name="Matsumura K."/>
            <person name="Nakajima Y."/>
            <person name="Mizuno T."/>
            <person name="Morinaga M."/>
            <person name="Sasaki M."/>
            <person name="Togashi T."/>
            <person name="Oyama M."/>
            <person name="Hata H."/>
            <person name="Watanabe M."/>
            <person name="Komatsu T."/>
            <person name="Mizushima-Sugano J."/>
            <person name="Satoh T."/>
            <person name="Shirai Y."/>
            <person name="Takahashi Y."/>
            <person name="Nakagawa K."/>
            <person name="Okumura K."/>
            <person name="Nagase T."/>
            <person name="Nomura N."/>
            <person name="Kikuchi H."/>
            <person name="Masuho Y."/>
            <person name="Yamashita R."/>
            <person name="Nakai K."/>
            <person name="Yada T."/>
            <person name="Nakamura Y."/>
            <person name="Ohara O."/>
            <person name="Isogai T."/>
            <person name="Sugano S."/>
        </authorList>
    </citation>
    <scope>NUCLEOTIDE SEQUENCE [LARGE SCALE MRNA] (ISOFORMS 1 AND 2)</scope>
    <scope>VARIANT SER-53</scope>
    <source>
        <tissue>Amygdala</tissue>
    </source>
</reference>
<reference key="7">
    <citation type="submission" date="2004-06" db="EMBL/GenBank/DDBJ databases">
        <title>Cloning of human full open reading frames in Gateway(TM) system entry vector (pDONR201).</title>
        <authorList>
            <person name="Ebert L."/>
            <person name="Schick M."/>
            <person name="Neubert P."/>
            <person name="Schatten R."/>
            <person name="Henze S."/>
            <person name="Korn B."/>
        </authorList>
    </citation>
    <scope>NUCLEOTIDE SEQUENCE [LARGE SCALE MRNA] (ISOFORM 1)</scope>
    <scope>VARIANT SER-53</scope>
</reference>
<reference key="8">
    <citation type="submission" date="2005-04" db="EMBL/GenBank/DDBJ databases">
        <authorList>
            <person name="Suzuki Y."/>
            <person name="Sugano S."/>
            <person name="Totoki Y."/>
            <person name="Toyoda A."/>
            <person name="Takeda T."/>
            <person name="Sakaki Y."/>
            <person name="Tanaka A."/>
            <person name="Yokoyama S."/>
        </authorList>
    </citation>
    <scope>NUCLEOTIDE SEQUENCE [LARGE SCALE MRNA] (ISOFORM 1)</scope>
    <source>
        <tissue>Brain</tissue>
    </source>
</reference>
<reference key="9">
    <citation type="journal article" date="2005" name="DNA Res.">
        <title>Signal sequence and keyword trap in silico for selection of full-length human cDNAs encoding secretion or membrane proteins from oligo-capped cDNA libraries.</title>
        <authorList>
            <person name="Otsuki T."/>
            <person name="Ota T."/>
            <person name="Nishikawa T."/>
            <person name="Hayashi K."/>
            <person name="Suzuki Y."/>
            <person name="Yamamoto J."/>
            <person name="Wakamatsu A."/>
            <person name="Kimura K."/>
            <person name="Sakamoto K."/>
            <person name="Hatano N."/>
            <person name="Kawai Y."/>
            <person name="Ishii S."/>
            <person name="Saito K."/>
            <person name="Kojima S."/>
            <person name="Sugiyama T."/>
            <person name="Ono T."/>
            <person name="Okano K."/>
            <person name="Yoshikawa Y."/>
            <person name="Aotsuka S."/>
            <person name="Sasaki N."/>
            <person name="Hattori A."/>
            <person name="Okumura K."/>
            <person name="Nagai K."/>
            <person name="Sugano S."/>
            <person name="Isogai T."/>
        </authorList>
    </citation>
    <scope>NUCLEOTIDE SEQUENCE [LARGE SCALE MRNA] (ISOFORM 1)</scope>
    <source>
        <tissue>Teratocarcinoma</tissue>
    </source>
</reference>
<reference key="10">
    <citation type="journal article" date="2007" name="BMC Genomics">
        <title>The full-ORF clone resource of the German cDNA consortium.</title>
        <authorList>
            <person name="Bechtel S."/>
            <person name="Rosenfelder H."/>
            <person name="Duda A."/>
            <person name="Schmidt C.P."/>
            <person name="Ernst U."/>
            <person name="Wellenreuther R."/>
            <person name="Mehrle A."/>
            <person name="Schuster C."/>
            <person name="Bahr A."/>
            <person name="Bloecker H."/>
            <person name="Heubner D."/>
            <person name="Hoerlein A."/>
            <person name="Michel G."/>
            <person name="Wedler H."/>
            <person name="Koehrer K."/>
            <person name="Ottenwaelder B."/>
            <person name="Poustka A."/>
            <person name="Wiemann S."/>
            <person name="Schupp I."/>
        </authorList>
    </citation>
    <scope>NUCLEOTIDE SEQUENCE [LARGE SCALE MRNA] (ISOFORM 1)</scope>
    <scope>VARIANT SER-53</scope>
    <source>
        <tissue>Uterus</tissue>
    </source>
</reference>
<reference key="11">
    <citation type="submission" date="2005-07" db="EMBL/GenBank/DDBJ databases">
        <authorList>
            <person name="Mural R.J."/>
            <person name="Istrail S."/>
            <person name="Sutton G.G."/>
            <person name="Florea L."/>
            <person name="Halpern A.L."/>
            <person name="Mobarry C.M."/>
            <person name="Lippert R."/>
            <person name="Walenz B."/>
            <person name="Shatkay H."/>
            <person name="Dew I."/>
            <person name="Miller J.R."/>
            <person name="Flanigan M.J."/>
            <person name="Edwards N.J."/>
            <person name="Bolanos R."/>
            <person name="Fasulo D."/>
            <person name="Halldorsson B.V."/>
            <person name="Hannenhalli S."/>
            <person name="Turner R."/>
            <person name="Yooseph S."/>
            <person name="Lu F."/>
            <person name="Nusskern D.R."/>
            <person name="Shue B.C."/>
            <person name="Zheng X.H."/>
            <person name="Zhong F."/>
            <person name="Delcher A.L."/>
            <person name="Huson D.H."/>
            <person name="Kravitz S.A."/>
            <person name="Mouchard L."/>
            <person name="Reinert K."/>
            <person name="Remington K.A."/>
            <person name="Clark A.G."/>
            <person name="Waterman M.S."/>
            <person name="Eichler E.E."/>
            <person name="Adams M.D."/>
            <person name="Hunkapiller M.W."/>
            <person name="Myers E.W."/>
            <person name="Venter J.C."/>
        </authorList>
    </citation>
    <scope>NUCLEOTIDE SEQUENCE [LARGE SCALE GENOMIC DNA]</scope>
</reference>
<reference key="12">
    <citation type="journal article" date="2004" name="Genome Res.">
        <title>The status, quality, and expansion of the NIH full-length cDNA project: the Mammalian Gene Collection (MGC).</title>
        <authorList>
            <consortium name="The MGC Project Team"/>
        </authorList>
    </citation>
    <scope>NUCLEOTIDE SEQUENCE [LARGE SCALE MRNA] (ISOFORMS 1; 2 AND 3)</scope>
    <scope>VARIANT SER-53</scope>
    <source>
        <tissue>Brain</tissue>
        <tissue>Chondrosarcoma</tissue>
        <tissue>Colon</tissue>
    </source>
</reference>
<reference key="13">
    <citation type="journal article" date="2005" name="J. Neurochem.">
        <title>Beta-amyloid protein converting enzyme 1 and brain-specific type II membrane protein BRI3: binding partners processed by furin.</title>
        <authorList>
            <person name="Wickham L."/>
            <person name="Benjannet S."/>
            <person name="Marcinkiewicz E."/>
            <person name="Chretien M."/>
            <person name="Seidah N.G."/>
        </authorList>
    </citation>
    <scope>INTERACTION WITH BACE1</scope>
    <scope>GLYCOSYLATION</scope>
    <scope>CLEAVAGE</scope>
    <scope>TISSUE SPECIFICITY</scope>
    <scope>MUTAGENESIS OF 241-LYS-ARG-242</scope>
</reference>
<reference key="14">
    <citation type="journal article" date="2008" name="BMB Rep.">
        <title>BRI3 associates with SCG10 and attenuates NGF-induced neurite outgrowth in PC12 cells.</title>
        <authorList>
            <person name="Gong Y."/>
            <person name="Wu J."/>
            <person name="Qiang H."/>
            <person name="Liu B."/>
            <person name="Chi Z."/>
            <person name="Chen T."/>
            <person name="Yin B."/>
            <person name="Peng X."/>
            <person name="Yuan J."/>
        </authorList>
    </citation>
    <scope>FUNCTION</scope>
    <scope>INTERACTION WITH STMN2</scope>
</reference>
<reference key="15">
    <citation type="journal article" date="2009" name="J. Biol. Chem.">
        <title>Substrate requirements for SPPL2b-dependent regulated intramembrane proteolysis.</title>
        <authorList>
            <person name="Martin L."/>
            <person name="Fluhrer R."/>
            <person name="Haass C."/>
        </authorList>
    </citation>
    <scope>ABSENCE OF CLEAVAGE BY ADAM10 AND SPPL2B</scope>
    <scope>SUBCELLULAR LOCATION</scope>
</reference>
<reference key="16">
    <citation type="journal article" date="2009" name="J. Biol. Chem.">
        <title>BRI3 inhibits amyloid precursor protein processing in a mechanistically distinct manner from its homologue dementia gene BRI2.</title>
        <authorList>
            <person name="Matsuda S."/>
            <person name="Matsuda Y."/>
            <person name="D'Adamio L."/>
        </authorList>
    </citation>
    <scope>FUNCTION</scope>
    <scope>INTERACTION WITH APP</scope>
</reference>
<reference key="17">
    <citation type="journal article" date="2011" name="BMC Syst. Biol.">
        <title>Initial characterization of the human central proteome.</title>
        <authorList>
            <person name="Burkard T.R."/>
            <person name="Planyavsky M."/>
            <person name="Kaupe I."/>
            <person name="Breitwieser F.P."/>
            <person name="Buerckstuemmer T."/>
            <person name="Bennett K.L."/>
            <person name="Superti-Furga G."/>
            <person name="Colinge J."/>
        </authorList>
    </citation>
    <scope>IDENTIFICATION BY MASS SPECTROMETRY [LARGE SCALE ANALYSIS]</scope>
</reference>
<comment type="function">
    <text evidence="1 10 12">Negative regulator of amyloid-beta peptide production. May inhibit the processing of APP by blocking its access to alpha- and beta-secretase. Binding to the beta-secretase-cleaved APP C-terminal fragment is negligible, suggesting that ITM2C is a poor gamma-secretase cleavage inhibitor. May play a role in TNF-induced cell death and neuronal differentiation (By similarity).</text>
</comment>
<comment type="subunit">
    <text evidence="8 10 12">Interacts with BACE1. Interacts with APP. Interacts with STMN2.</text>
</comment>
<comment type="interaction">
    <interactant intactId="EBI-12811565">
        <id>Q9NQX7-3</id>
    </interactant>
    <interactant intactId="EBI-10271156">
        <id>Q8NHW4</id>
        <label>CCL4L2</label>
    </interactant>
    <organismsDiffer>false</organismsDiffer>
    <experiments>3</experiments>
</comment>
<comment type="interaction">
    <interactant intactId="EBI-12811565">
        <id>Q9NQX7-3</id>
    </interactant>
    <interactant intactId="EBI-3911467">
        <id>Q07325</id>
        <label>CXCL9</label>
    </interactant>
    <organismsDiffer>false</organismsDiffer>
    <experiments>3</experiments>
</comment>
<comment type="interaction">
    <interactant intactId="EBI-12811565">
        <id>Q9NQX7-3</id>
    </interactant>
    <interactant intactId="EBI-12142257">
        <id>Q8TBE3</id>
        <label>FNDC9</label>
    </interactant>
    <organismsDiffer>false</organismsDiffer>
    <experiments>3</experiments>
</comment>
<comment type="interaction">
    <interactant intactId="EBI-12811565">
        <id>Q9NQX7-3</id>
    </interactant>
    <interactant intactId="EBI-2804156">
        <id>Q6UX06</id>
        <label>OLFM4</label>
    </interactant>
    <organismsDiffer>false</organismsDiffer>
    <experiments>3</experiments>
</comment>
<comment type="interaction">
    <interactant intactId="EBI-12811565">
        <id>Q9NQX7-3</id>
    </interactant>
    <interactant intactId="EBI-10179682">
        <id>O00526</id>
        <label>UPK2</label>
    </interactant>
    <organismsDiffer>false</organismsDiffer>
    <experiments>3</experiments>
</comment>
<comment type="subcellular location">
    <subcellularLocation>
        <location evidence="1">Lysosome membrane</location>
        <topology evidence="1">Single-pass type II membrane protein</topology>
    </subcellularLocation>
    <subcellularLocation>
        <location evidence="11">Cell membrane</location>
        <topology evidence="11">Single-pass type II membrane protein</topology>
    </subcellularLocation>
</comment>
<comment type="alternative products">
    <event type="alternative splicing"/>
    <isoform>
        <id>Q9NQX7-1</id>
        <name>1</name>
        <sequence type="displayed"/>
    </isoform>
    <isoform>
        <id>Q9NQX7-2</id>
        <name>2</name>
        <sequence type="described" ref="VSP_013471"/>
    </isoform>
    <isoform>
        <id>Q9NQX7-3</id>
        <name>3</name>
        <sequence type="described" ref="VSP_013472"/>
    </isoform>
</comment>
<comment type="tissue specificity">
    <text evidence="5 8">High levels in the brain, specifically in the cerebral cortex, medulla, amygdala, hippocampus, thalamus, caudate nucleus, cerebellum, olfactory lobe and spinal cord. Very low levels in other organs.</text>
</comment>
<comment type="PTM">
    <text evidence="8">Type I membrane-bound, as well as soluble, furin has a pre-eminent role in ITM2C proteolytic processing. PCSK7 and PCSK5 may also be involved although to a lesser extent. The soluble form of PCSK7 is incapable of processing ITM2C. Fails to undergo shedding by ADAM10 and intramembrane cleavage by SPPL2B.</text>
</comment>
<comment type="similarity">
    <text evidence="17">Belongs to the ITM2 family.</text>
</comment>
<protein>
    <recommendedName>
        <fullName>Integral membrane protein 2C</fullName>
    </recommendedName>
    <alternativeName>
        <fullName>Cerebral protein 14</fullName>
    </alternativeName>
    <alternativeName>
        <fullName>Transmembrane protein BRI3</fullName>
    </alternativeName>
    <component>
        <recommendedName>
            <fullName>CT-BRI3</fullName>
        </recommendedName>
    </component>
</protein>
<keyword id="KW-0025">Alternative splicing</keyword>
<keyword id="KW-1003">Cell membrane</keyword>
<keyword id="KW-0165">Cleavage on pair of basic residues</keyword>
<keyword id="KW-1015">Disulfide bond</keyword>
<keyword id="KW-0325">Glycoprotein</keyword>
<keyword id="KW-0458">Lysosome</keyword>
<keyword id="KW-0472">Membrane</keyword>
<keyword id="KW-0597">Phosphoprotein</keyword>
<keyword id="KW-1267">Proteomics identification</keyword>
<keyword id="KW-1185">Reference proteome</keyword>
<keyword id="KW-0735">Signal-anchor</keyword>
<keyword id="KW-0812">Transmembrane</keyword>
<keyword id="KW-1133">Transmembrane helix</keyword>
<gene>
    <name type="primary">ITM2C</name>
    <name type="synonym">BRI3</name>
    <name type="ORF">hucep-14</name>
    <name type="ORF">NPD018</name>
    <name type="ORF">PSEC0047</name>
</gene>
<feature type="chain" id="PRO_0000154826" description="Integral membrane protein 2C">
    <location>
        <begin position="1"/>
        <end position="267"/>
    </location>
</feature>
<feature type="peptide" id="PRO_0000232645" description="CT-BRI3">
    <location>
        <begin position="243"/>
        <end position="267"/>
    </location>
</feature>
<feature type="transmembrane region" description="Helical; Signal-anchor for type II membrane protein" evidence="3">
    <location>
        <begin position="55"/>
        <end position="75"/>
    </location>
</feature>
<feature type="domain" description="BRICHOS" evidence="4">
    <location>
        <begin position="136"/>
        <end position="230"/>
    </location>
</feature>
<feature type="site" description="Cleavage; by furin">
    <location>
        <begin position="242"/>
        <end position="243"/>
    </location>
</feature>
<feature type="modified residue" description="Phosphothreonine" evidence="2">
    <location>
        <position position="37"/>
    </location>
</feature>
<feature type="glycosylation site" description="N-linked (GlcNAc...) asparagine" evidence="18">
    <location>
        <position position="169"/>
    </location>
</feature>
<feature type="disulfide bond" evidence="1">
    <location>
        <begin position="163"/>
        <end position="222"/>
    </location>
</feature>
<feature type="splice variant" id="VSP_013471" description="In isoform 2." evidence="15 16">
    <location>
        <begin position="41"/>
        <end position="87"/>
    </location>
</feature>
<feature type="splice variant" id="VSP_013472" description="In isoform 3." evidence="16">
    <location>
        <begin position="151"/>
        <end position="187"/>
    </location>
</feature>
<feature type="sequence variant" id="VAR_022111" description="In dbSNP:rs2289235." evidence="6 7 9 13 14">
    <original>G</original>
    <variation>S</variation>
    <location>
        <position position="53"/>
    </location>
</feature>
<feature type="mutagenesis site" description="Completely abrogates proteolytic processing." evidence="8">
    <original>KR</original>
    <variation>AA</variation>
    <location>
        <begin position="241"/>
        <end position="242"/>
    </location>
</feature>
<feature type="sequence conflict" description="In Ref. 6; BAC03562." evidence="17" ref="6">
    <location>
        <begin position="22"/>
        <end position="39"/>
    </location>
</feature>
<feature type="sequence conflict" description="In Ref. 8; BAD96417." evidence="17" ref="8">
    <original>V</original>
    <variation>A</variation>
    <location>
        <position position="133"/>
    </location>
</feature>
<feature type="sequence conflict" description="In Ref. 7; CAG33489." evidence="17" ref="7">
    <original>T</original>
    <variation>A</variation>
    <location>
        <position position="205"/>
    </location>
</feature>
<sequence>MVKISFQPAVAGIKGDKADKASASAPAPASATEILLTPAREEQPPQHRSKRGGSVGGVCYLSMGMVVLLMGLVFASVYIYRYFFLAQLARDNFFRCGVLYEDSLSSQVRTQMELEEDVKIYLDENYERINVPVPQFGGGDPADIIHDFQRGLTAYHDISLDKCYVIELNTTIVLPPRNFWELLMNVKRGTYLPQTYIIQEEMVVTEHVSDKEALGSFIYHLCNGKDTYRLRRRATRRRINKRGAKNCNAIRHFENTFVVETLICGVV</sequence>
<name>ITM2C_HUMAN</name>
<organism>
    <name type="scientific">Homo sapiens</name>
    <name type="common">Human</name>
    <dbReference type="NCBI Taxonomy" id="9606"/>
    <lineage>
        <taxon>Eukaryota</taxon>
        <taxon>Metazoa</taxon>
        <taxon>Chordata</taxon>
        <taxon>Craniata</taxon>
        <taxon>Vertebrata</taxon>
        <taxon>Euteleostomi</taxon>
        <taxon>Mammalia</taxon>
        <taxon>Eutheria</taxon>
        <taxon>Euarchontoglires</taxon>
        <taxon>Primates</taxon>
        <taxon>Haplorrhini</taxon>
        <taxon>Catarrhini</taxon>
        <taxon>Hominidae</taxon>
        <taxon>Homo</taxon>
    </lineage>
</organism>
<dbReference type="EMBL" id="AB003629">
    <property type="protein sequence ID" value="BAB46927.1"/>
    <property type="molecule type" value="mRNA"/>
</dbReference>
<dbReference type="EMBL" id="AF272043">
    <property type="protein sequence ID" value="AAF89492.1"/>
    <property type="molecule type" value="mRNA"/>
</dbReference>
<dbReference type="EMBL" id="AY049777">
    <property type="protein sequence ID" value="AAL15434.1"/>
    <property type="molecule type" value="mRNA"/>
</dbReference>
<dbReference type="EMBL" id="AF271781">
    <property type="protein sequence ID" value="AAG44792.1"/>
    <property type="molecule type" value="mRNA"/>
</dbReference>
<dbReference type="EMBL" id="AL136603">
    <property type="protein sequence ID" value="CAB66538.1"/>
    <property type="molecule type" value="mRNA"/>
</dbReference>
<dbReference type="EMBL" id="AK056321">
    <property type="protein sequence ID" value="BAG51676.1"/>
    <property type="molecule type" value="mRNA"/>
</dbReference>
<dbReference type="EMBL" id="AK090975">
    <property type="protein sequence ID" value="BAC03562.1"/>
    <property type="molecule type" value="mRNA"/>
</dbReference>
<dbReference type="EMBL" id="CR457208">
    <property type="protein sequence ID" value="CAG33489.1"/>
    <property type="molecule type" value="mRNA"/>
</dbReference>
<dbReference type="EMBL" id="AK222697">
    <property type="protein sequence ID" value="BAD96417.1"/>
    <property type="molecule type" value="mRNA"/>
</dbReference>
<dbReference type="EMBL" id="AK075361">
    <property type="protein sequence ID" value="BAC11570.1"/>
    <property type="molecule type" value="mRNA"/>
</dbReference>
<dbReference type="EMBL" id="AL713651">
    <property type="protein sequence ID" value="CAD28460.1"/>
    <property type="molecule type" value="mRNA"/>
</dbReference>
<dbReference type="EMBL" id="CH471063">
    <property type="protein sequence ID" value="EAW70936.1"/>
    <property type="molecule type" value="Genomic_DNA"/>
</dbReference>
<dbReference type="EMBL" id="BC002424">
    <property type="protein sequence ID" value="AAH02424.1"/>
    <property type="molecule type" value="mRNA"/>
</dbReference>
<dbReference type="EMBL" id="BC025742">
    <property type="protein sequence ID" value="AAH25742.1"/>
    <property type="molecule type" value="mRNA"/>
</dbReference>
<dbReference type="EMBL" id="BC050668">
    <property type="protein sequence ID" value="AAH50668.1"/>
    <property type="molecule type" value="mRNA"/>
</dbReference>
<dbReference type="EMBL" id="BC098563">
    <property type="protein sequence ID" value="AAH98563.1"/>
    <property type="molecule type" value="mRNA"/>
</dbReference>
<dbReference type="CCDS" id="CCDS2479.1">
    <molecule id="Q9NQX7-1"/>
</dbReference>
<dbReference type="CCDS" id="CCDS33395.1">
    <molecule id="Q9NQX7-3"/>
</dbReference>
<dbReference type="CCDS" id="CCDS33396.1">
    <molecule id="Q9NQX7-2"/>
</dbReference>
<dbReference type="RefSeq" id="NP_001012532.1">
    <molecule id="Q9NQX7-2"/>
    <property type="nucleotide sequence ID" value="NM_001012514.3"/>
</dbReference>
<dbReference type="RefSeq" id="NP_001012534.1">
    <molecule id="Q9NQX7-3"/>
    <property type="nucleotide sequence ID" value="NM_001012516.2"/>
</dbReference>
<dbReference type="RefSeq" id="NP_001274169.1">
    <property type="nucleotide sequence ID" value="NM_001287240.1"/>
</dbReference>
<dbReference type="RefSeq" id="NP_001274170.1">
    <molecule id="Q9NQX7-1"/>
    <property type="nucleotide sequence ID" value="NM_001287241.2"/>
</dbReference>
<dbReference type="RefSeq" id="NP_112188.1">
    <molecule id="Q9NQX7-1"/>
    <property type="nucleotide sequence ID" value="NM_030926.6"/>
</dbReference>
<dbReference type="SMR" id="Q9NQX7"/>
<dbReference type="BioGRID" id="123553">
    <property type="interactions" value="115"/>
</dbReference>
<dbReference type="FunCoup" id="Q9NQX7">
    <property type="interactions" value="1153"/>
</dbReference>
<dbReference type="IntAct" id="Q9NQX7">
    <property type="interactions" value="73"/>
</dbReference>
<dbReference type="MINT" id="Q9NQX7"/>
<dbReference type="STRING" id="9606.ENSP00000322730"/>
<dbReference type="TCDB" id="1.C.81.2.3">
    <property type="family name" value="the arenicin (arenicin) family"/>
</dbReference>
<dbReference type="GlyCosmos" id="Q9NQX7">
    <property type="glycosylation" value="1 site, No reported glycans"/>
</dbReference>
<dbReference type="GlyGen" id="Q9NQX7">
    <property type="glycosylation" value="1 site"/>
</dbReference>
<dbReference type="iPTMnet" id="Q9NQX7"/>
<dbReference type="PhosphoSitePlus" id="Q9NQX7"/>
<dbReference type="SwissPalm" id="Q9NQX7"/>
<dbReference type="BioMuta" id="ITM2C"/>
<dbReference type="DMDM" id="12585259"/>
<dbReference type="jPOST" id="Q9NQX7"/>
<dbReference type="MassIVE" id="Q9NQX7"/>
<dbReference type="PaxDb" id="9606-ENSP00000322730"/>
<dbReference type="PeptideAtlas" id="Q9NQX7"/>
<dbReference type="ProteomicsDB" id="82226">
    <molecule id="Q9NQX7-1"/>
</dbReference>
<dbReference type="ProteomicsDB" id="82227">
    <molecule id="Q9NQX7-2"/>
</dbReference>
<dbReference type="ProteomicsDB" id="82228">
    <molecule id="Q9NQX7-3"/>
</dbReference>
<dbReference type="Pumba" id="Q9NQX7"/>
<dbReference type="Antibodypedia" id="34409">
    <property type="antibodies" value="158 antibodies from 20 providers"/>
</dbReference>
<dbReference type="DNASU" id="81618"/>
<dbReference type="Ensembl" id="ENST00000326407.10">
    <molecule id="Q9NQX7-3"/>
    <property type="protein sequence ID" value="ENSP00000322100.6"/>
    <property type="gene ID" value="ENSG00000135916.16"/>
</dbReference>
<dbReference type="Ensembl" id="ENST00000326427.11">
    <molecule id="Q9NQX7-1"/>
    <property type="protein sequence ID" value="ENSP00000322730.6"/>
    <property type="gene ID" value="ENSG00000135916.16"/>
</dbReference>
<dbReference type="Ensembl" id="ENST00000335005.10">
    <molecule id="Q9NQX7-2"/>
    <property type="protein sequence ID" value="ENSP00000335121.6"/>
    <property type="gene ID" value="ENSG00000135916.16"/>
</dbReference>
<dbReference type="GeneID" id="81618"/>
<dbReference type="KEGG" id="hsa:81618"/>
<dbReference type="MANE-Select" id="ENST00000326427.11">
    <property type="protein sequence ID" value="ENSP00000322730.6"/>
    <property type="RefSeq nucleotide sequence ID" value="NM_030926.6"/>
    <property type="RefSeq protein sequence ID" value="NP_112188.1"/>
</dbReference>
<dbReference type="UCSC" id="uc002vqz.5">
    <molecule id="Q9NQX7-1"/>
    <property type="organism name" value="human"/>
</dbReference>
<dbReference type="AGR" id="HGNC:6175"/>
<dbReference type="CTD" id="81618"/>
<dbReference type="DisGeNET" id="81618"/>
<dbReference type="GeneCards" id="ITM2C"/>
<dbReference type="HGNC" id="HGNC:6175">
    <property type="gene designation" value="ITM2C"/>
</dbReference>
<dbReference type="HPA" id="ENSG00000135916">
    <property type="expression patterns" value="Tissue enhanced (brain, intestine)"/>
</dbReference>
<dbReference type="MIM" id="609554">
    <property type="type" value="gene"/>
</dbReference>
<dbReference type="neXtProt" id="NX_Q9NQX7"/>
<dbReference type="OpenTargets" id="ENSG00000135916"/>
<dbReference type="PharmGKB" id="PA29972"/>
<dbReference type="VEuPathDB" id="HostDB:ENSG00000135916"/>
<dbReference type="eggNOG" id="KOG4681">
    <property type="taxonomic scope" value="Eukaryota"/>
</dbReference>
<dbReference type="GeneTree" id="ENSGT00950000183115"/>
<dbReference type="InParanoid" id="Q9NQX7"/>
<dbReference type="OMA" id="AGNCNHI"/>
<dbReference type="OrthoDB" id="9982095at2759"/>
<dbReference type="PAN-GO" id="Q9NQX7">
    <property type="GO annotations" value="4 GO annotations based on evolutionary models"/>
</dbReference>
<dbReference type="PhylomeDB" id="Q9NQX7"/>
<dbReference type="TreeFam" id="TF317770"/>
<dbReference type="PathwayCommons" id="Q9NQX7"/>
<dbReference type="SignaLink" id="Q9NQX7"/>
<dbReference type="BioGRID-ORCS" id="81618">
    <property type="hits" value="10 hits in 1158 CRISPR screens"/>
</dbReference>
<dbReference type="ChiTaRS" id="ITM2C">
    <property type="organism name" value="human"/>
</dbReference>
<dbReference type="GeneWiki" id="ITM2C"/>
<dbReference type="GenomeRNAi" id="81618"/>
<dbReference type="Pharos" id="Q9NQX7">
    <property type="development level" value="Tbio"/>
</dbReference>
<dbReference type="PRO" id="PR:Q9NQX7"/>
<dbReference type="Proteomes" id="UP000005640">
    <property type="component" value="Chromosome 2"/>
</dbReference>
<dbReference type="RNAct" id="Q9NQX7">
    <property type="molecule type" value="protein"/>
</dbReference>
<dbReference type="Bgee" id="ENSG00000135916">
    <property type="expression patterns" value="Expressed in mucosa of transverse colon and 196 other cell types or tissues"/>
</dbReference>
<dbReference type="ExpressionAtlas" id="Q9NQX7">
    <property type="expression patterns" value="baseline and differential"/>
</dbReference>
<dbReference type="GO" id="GO:0070062">
    <property type="term" value="C:extracellular exosome"/>
    <property type="evidence" value="ECO:0007005"/>
    <property type="project" value="UniProtKB"/>
</dbReference>
<dbReference type="GO" id="GO:0005794">
    <property type="term" value="C:Golgi apparatus"/>
    <property type="evidence" value="ECO:0000314"/>
    <property type="project" value="LIFEdb"/>
</dbReference>
<dbReference type="GO" id="GO:0005765">
    <property type="term" value="C:lysosomal membrane"/>
    <property type="evidence" value="ECO:0007669"/>
    <property type="project" value="UniProtKB-SubCell"/>
</dbReference>
<dbReference type="GO" id="GO:0005764">
    <property type="term" value="C:lysosome"/>
    <property type="evidence" value="ECO:0000314"/>
    <property type="project" value="UniProtKB"/>
</dbReference>
<dbReference type="GO" id="GO:0048471">
    <property type="term" value="C:perinuclear region of cytoplasm"/>
    <property type="evidence" value="ECO:0000314"/>
    <property type="project" value="UniProtKB"/>
</dbReference>
<dbReference type="GO" id="GO:0005886">
    <property type="term" value="C:plasma membrane"/>
    <property type="evidence" value="ECO:0000314"/>
    <property type="project" value="UniProtKB"/>
</dbReference>
<dbReference type="GO" id="GO:0001540">
    <property type="term" value="F:amyloid-beta binding"/>
    <property type="evidence" value="ECO:0000353"/>
    <property type="project" value="BHF-UCL"/>
</dbReference>
<dbReference type="GO" id="GO:0005524">
    <property type="term" value="F:ATP binding"/>
    <property type="evidence" value="ECO:0007669"/>
    <property type="project" value="Ensembl"/>
</dbReference>
<dbReference type="GO" id="GO:0042985">
    <property type="term" value="P:negative regulation of amyloid precursor protein biosynthetic process"/>
    <property type="evidence" value="ECO:0000318"/>
    <property type="project" value="GO_Central"/>
</dbReference>
<dbReference type="GO" id="GO:0010977">
    <property type="term" value="P:negative regulation of neuron projection development"/>
    <property type="evidence" value="ECO:0000314"/>
    <property type="project" value="UniProtKB"/>
</dbReference>
<dbReference type="GO" id="GO:0030182">
    <property type="term" value="P:neuron differentiation"/>
    <property type="evidence" value="ECO:0000314"/>
    <property type="project" value="UniProtKB"/>
</dbReference>
<dbReference type="GO" id="GO:2001238">
    <property type="term" value="P:positive regulation of extrinsic apoptotic signaling pathway"/>
    <property type="evidence" value="ECO:0007669"/>
    <property type="project" value="Ensembl"/>
</dbReference>
<dbReference type="Gene3D" id="3.30.390.150">
    <property type="match status" value="1"/>
</dbReference>
<dbReference type="InterPro" id="IPR007084">
    <property type="entry name" value="BRICHOS_dom"/>
</dbReference>
<dbReference type="InterPro" id="IPR040145">
    <property type="entry name" value="ITM2"/>
</dbReference>
<dbReference type="PANTHER" id="PTHR10962:SF5">
    <property type="entry name" value="INTEGRAL MEMBRANE PROTEIN 2C"/>
    <property type="match status" value="1"/>
</dbReference>
<dbReference type="PANTHER" id="PTHR10962">
    <property type="entry name" value="INTEGRAL TRANSMEMBRANE PROTEIN 2"/>
    <property type="match status" value="1"/>
</dbReference>
<dbReference type="Pfam" id="PF04089">
    <property type="entry name" value="BRICHOS"/>
    <property type="match status" value="1"/>
</dbReference>
<dbReference type="SMART" id="SM01039">
    <property type="entry name" value="BRICHOS"/>
    <property type="match status" value="1"/>
</dbReference>
<dbReference type="PROSITE" id="PS50869">
    <property type="entry name" value="BRICHOS"/>
    <property type="match status" value="1"/>
</dbReference>